<organism>
    <name type="scientific">Aeromonas salmonicida (strain A449)</name>
    <dbReference type="NCBI Taxonomy" id="382245"/>
    <lineage>
        <taxon>Bacteria</taxon>
        <taxon>Pseudomonadati</taxon>
        <taxon>Pseudomonadota</taxon>
        <taxon>Gammaproteobacteria</taxon>
        <taxon>Aeromonadales</taxon>
        <taxon>Aeromonadaceae</taxon>
        <taxon>Aeromonas</taxon>
    </lineage>
</organism>
<gene>
    <name evidence="1" type="primary">aroC</name>
    <name type="ordered locus">ASA_1932</name>
</gene>
<feature type="chain" id="PRO_0000322382" description="Chorismate synthase">
    <location>
        <begin position="1"/>
        <end position="362"/>
    </location>
</feature>
<feature type="binding site" evidence="1">
    <location>
        <position position="48"/>
    </location>
    <ligand>
        <name>NADP(+)</name>
        <dbReference type="ChEBI" id="CHEBI:58349"/>
    </ligand>
</feature>
<feature type="binding site" evidence="1">
    <location>
        <position position="54"/>
    </location>
    <ligand>
        <name>NADP(+)</name>
        <dbReference type="ChEBI" id="CHEBI:58349"/>
    </ligand>
</feature>
<feature type="binding site" evidence="1">
    <location>
        <begin position="125"/>
        <end position="127"/>
    </location>
    <ligand>
        <name>FMN</name>
        <dbReference type="ChEBI" id="CHEBI:58210"/>
    </ligand>
</feature>
<feature type="binding site" evidence="1">
    <location>
        <begin position="238"/>
        <end position="239"/>
    </location>
    <ligand>
        <name>FMN</name>
        <dbReference type="ChEBI" id="CHEBI:58210"/>
    </ligand>
</feature>
<feature type="binding site" evidence="1">
    <location>
        <position position="278"/>
    </location>
    <ligand>
        <name>FMN</name>
        <dbReference type="ChEBI" id="CHEBI:58210"/>
    </ligand>
</feature>
<feature type="binding site" evidence="1">
    <location>
        <begin position="293"/>
        <end position="297"/>
    </location>
    <ligand>
        <name>FMN</name>
        <dbReference type="ChEBI" id="CHEBI:58210"/>
    </ligand>
</feature>
<feature type="binding site" evidence="1">
    <location>
        <position position="319"/>
    </location>
    <ligand>
        <name>FMN</name>
        <dbReference type="ChEBI" id="CHEBI:58210"/>
    </ligand>
</feature>
<accession>A4SM83</accession>
<name>AROC_AERS4</name>
<comment type="function">
    <text evidence="1">Catalyzes the anti-1,4-elimination of the C-3 phosphate and the C-6 proR hydrogen from 5-enolpyruvylshikimate-3-phosphate (EPSP) to yield chorismate, which is the branch point compound that serves as the starting substrate for the three terminal pathways of aromatic amino acid biosynthesis. This reaction introduces a second double bond into the aromatic ring system.</text>
</comment>
<comment type="catalytic activity">
    <reaction evidence="1">
        <text>5-O-(1-carboxyvinyl)-3-phosphoshikimate = chorismate + phosphate</text>
        <dbReference type="Rhea" id="RHEA:21020"/>
        <dbReference type="ChEBI" id="CHEBI:29748"/>
        <dbReference type="ChEBI" id="CHEBI:43474"/>
        <dbReference type="ChEBI" id="CHEBI:57701"/>
        <dbReference type="EC" id="4.2.3.5"/>
    </reaction>
</comment>
<comment type="cofactor">
    <cofactor evidence="1">
        <name>FMNH2</name>
        <dbReference type="ChEBI" id="CHEBI:57618"/>
    </cofactor>
    <text evidence="1">Reduced FMN (FMNH(2)).</text>
</comment>
<comment type="pathway">
    <text evidence="1">Metabolic intermediate biosynthesis; chorismate biosynthesis; chorismate from D-erythrose 4-phosphate and phosphoenolpyruvate: step 7/7.</text>
</comment>
<comment type="subunit">
    <text evidence="1">Homotetramer.</text>
</comment>
<comment type="similarity">
    <text evidence="1">Belongs to the chorismate synthase family.</text>
</comment>
<dbReference type="EC" id="4.2.3.5" evidence="1"/>
<dbReference type="EMBL" id="CP000644">
    <property type="protein sequence ID" value="ABO90005.1"/>
    <property type="molecule type" value="Genomic_DNA"/>
</dbReference>
<dbReference type="RefSeq" id="WP_005315468.1">
    <property type="nucleotide sequence ID" value="NC_009348.1"/>
</dbReference>
<dbReference type="SMR" id="A4SM83"/>
<dbReference type="STRING" id="29491.GCA_000820065_03929"/>
<dbReference type="KEGG" id="asa:ASA_1932"/>
<dbReference type="eggNOG" id="COG0082">
    <property type="taxonomic scope" value="Bacteria"/>
</dbReference>
<dbReference type="HOGENOM" id="CLU_034547_0_2_6"/>
<dbReference type="UniPathway" id="UPA00053">
    <property type="reaction ID" value="UER00090"/>
</dbReference>
<dbReference type="Proteomes" id="UP000000225">
    <property type="component" value="Chromosome"/>
</dbReference>
<dbReference type="GO" id="GO:0005829">
    <property type="term" value="C:cytosol"/>
    <property type="evidence" value="ECO:0007669"/>
    <property type="project" value="TreeGrafter"/>
</dbReference>
<dbReference type="GO" id="GO:0004107">
    <property type="term" value="F:chorismate synthase activity"/>
    <property type="evidence" value="ECO:0007669"/>
    <property type="project" value="UniProtKB-UniRule"/>
</dbReference>
<dbReference type="GO" id="GO:0010181">
    <property type="term" value="F:FMN binding"/>
    <property type="evidence" value="ECO:0007669"/>
    <property type="project" value="TreeGrafter"/>
</dbReference>
<dbReference type="GO" id="GO:0008652">
    <property type="term" value="P:amino acid biosynthetic process"/>
    <property type="evidence" value="ECO:0007669"/>
    <property type="project" value="UniProtKB-KW"/>
</dbReference>
<dbReference type="GO" id="GO:0009073">
    <property type="term" value="P:aromatic amino acid family biosynthetic process"/>
    <property type="evidence" value="ECO:0007669"/>
    <property type="project" value="UniProtKB-KW"/>
</dbReference>
<dbReference type="GO" id="GO:0009423">
    <property type="term" value="P:chorismate biosynthetic process"/>
    <property type="evidence" value="ECO:0007669"/>
    <property type="project" value="UniProtKB-UniRule"/>
</dbReference>
<dbReference type="CDD" id="cd07304">
    <property type="entry name" value="Chorismate_synthase"/>
    <property type="match status" value="1"/>
</dbReference>
<dbReference type="FunFam" id="3.60.150.10:FF:000001">
    <property type="entry name" value="Chorismate synthase"/>
    <property type="match status" value="1"/>
</dbReference>
<dbReference type="Gene3D" id="3.60.150.10">
    <property type="entry name" value="Chorismate synthase AroC"/>
    <property type="match status" value="1"/>
</dbReference>
<dbReference type="HAMAP" id="MF_00300">
    <property type="entry name" value="Chorismate_synth"/>
    <property type="match status" value="1"/>
</dbReference>
<dbReference type="InterPro" id="IPR000453">
    <property type="entry name" value="Chorismate_synth"/>
</dbReference>
<dbReference type="InterPro" id="IPR035904">
    <property type="entry name" value="Chorismate_synth_AroC_sf"/>
</dbReference>
<dbReference type="InterPro" id="IPR020541">
    <property type="entry name" value="Chorismate_synthase_CS"/>
</dbReference>
<dbReference type="NCBIfam" id="TIGR00033">
    <property type="entry name" value="aroC"/>
    <property type="match status" value="1"/>
</dbReference>
<dbReference type="NCBIfam" id="NF003793">
    <property type="entry name" value="PRK05382.1"/>
    <property type="match status" value="1"/>
</dbReference>
<dbReference type="PANTHER" id="PTHR21085">
    <property type="entry name" value="CHORISMATE SYNTHASE"/>
    <property type="match status" value="1"/>
</dbReference>
<dbReference type="PANTHER" id="PTHR21085:SF0">
    <property type="entry name" value="CHORISMATE SYNTHASE"/>
    <property type="match status" value="1"/>
</dbReference>
<dbReference type="Pfam" id="PF01264">
    <property type="entry name" value="Chorismate_synt"/>
    <property type="match status" value="1"/>
</dbReference>
<dbReference type="PIRSF" id="PIRSF001456">
    <property type="entry name" value="Chorismate_synth"/>
    <property type="match status" value="1"/>
</dbReference>
<dbReference type="SUPFAM" id="SSF103263">
    <property type="entry name" value="Chorismate synthase, AroC"/>
    <property type="match status" value="1"/>
</dbReference>
<dbReference type="PROSITE" id="PS00787">
    <property type="entry name" value="CHORISMATE_SYNTHASE_1"/>
    <property type="match status" value="1"/>
</dbReference>
<dbReference type="PROSITE" id="PS00788">
    <property type="entry name" value="CHORISMATE_SYNTHASE_2"/>
    <property type="match status" value="1"/>
</dbReference>
<dbReference type="PROSITE" id="PS00789">
    <property type="entry name" value="CHORISMATE_SYNTHASE_3"/>
    <property type="match status" value="1"/>
</dbReference>
<sequence>MAGNSFGQLFRVTTFGESHGLALGAVVDGCPPGLEISEADLQIDLDRRKPGTSRYTTPRREPDEVKILSGVFEGRTTGTSIGLLIENTDQRSKDYSDIKDVFRPGHADYTYHQKYGQRDYRGGGRSSARETAMRVAAGAIAKKYLKQMHGIEITGFLSQLGPIKAEGFDAAQIEQNPFFFPDAGKLEELDQYMRDLKKEGNSVGAKVQVIATKVPVGLGEPVFDRLDADIAHAMMGINAVKGVEIGDGFAVVEQKGSEHRDEMTPAGFASNHAGGILGGISSGQDIVVSMALKPTSSITVPGKTINTEGEAIEMITKGRHDPCVGIRAVPIAEAMLALVLMDHLLRHRAQNQGVMTQTPQLR</sequence>
<reference key="1">
    <citation type="journal article" date="2008" name="BMC Genomics">
        <title>The genome of Aeromonas salmonicida subsp. salmonicida A449: insights into the evolution of a fish pathogen.</title>
        <authorList>
            <person name="Reith M.E."/>
            <person name="Singh R.K."/>
            <person name="Curtis B."/>
            <person name="Boyd J.M."/>
            <person name="Bouevitch A."/>
            <person name="Kimball J."/>
            <person name="Munholland J."/>
            <person name="Murphy C."/>
            <person name="Sarty D."/>
            <person name="Williams J."/>
            <person name="Nash J.H."/>
            <person name="Johnson S.C."/>
            <person name="Brown L.L."/>
        </authorList>
    </citation>
    <scope>NUCLEOTIDE SEQUENCE [LARGE SCALE GENOMIC DNA]</scope>
    <source>
        <strain>A449</strain>
    </source>
</reference>
<protein>
    <recommendedName>
        <fullName evidence="1">Chorismate synthase</fullName>
        <shortName evidence="1">CS</shortName>
        <ecNumber evidence="1">4.2.3.5</ecNumber>
    </recommendedName>
    <alternativeName>
        <fullName evidence="1">5-enolpyruvylshikimate-3-phosphate phospholyase</fullName>
    </alternativeName>
</protein>
<proteinExistence type="inferred from homology"/>
<keyword id="KW-0028">Amino-acid biosynthesis</keyword>
<keyword id="KW-0057">Aromatic amino acid biosynthesis</keyword>
<keyword id="KW-0274">FAD</keyword>
<keyword id="KW-0285">Flavoprotein</keyword>
<keyword id="KW-0288">FMN</keyword>
<keyword id="KW-0456">Lyase</keyword>
<keyword id="KW-0521">NADP</keyword>
<evidence type="ECO:0000255" key="1">
    <source>
        <dbReference type="HAMAP-Rule" id="MF_00300"/>
    </source>
</evidence>